<organism>
    <name type="scientific">Drosophila melanogaster</name>
    <name type="common">Fruit fly</name>
    <dbReference type="NCBI Taxonomy" id="7227"/>
    <lineage>
        <taxon>Eukaryota</taxon>
        <taxon>Metazoa</taxon>
        <taxon>Ecdysozoa</taxon>
        <taxon>Arthropoda</taxon>
        <taxon>Hexapoda</taxon>
        <taxon>Insecta</taxon>
        <taxon>Pterygota</taxon>
        <taxon>Neoptera</taxon>
        <taxon>Endopterygota</taxon>
        <taxon>Diptera</taxon>
        <taxon>Brachycera</taxon>
        <taxon>Muscomorpha</taxon>
        <taxon>Ephydroidea</taxon>
        <taxon>Drosophilidae</taxon>
        <taxon>Drosophila</taxon>
        <taxon>Sophophora</taxon>
    </lineage>
</organism>
<dbReference type="EMBL" id="AE014297">
    <property type="protein sequence ID" value="AAF56058.1"/>
    <property type="molecule type" value="Genomic_DNA"/>
</dbReference>
<dbReference type="EMBL" id="AY058673">
    <property type="protein sequence ID" value="AAL13902.1"/>
    <property type="molecule type" value="mRNA"/>
</dbReference>
<dbReference type="RefSeq" id="NP_651092.1">
    <property type="nucleotide sequence ID" value="NM_142835.4"/>
</dbReference>
<dbReference type="BioGRID" id="67644">
    <property type="interactions" value="38"/>
</dbReference>
<dbReference type="FunCoup" id="Q9VCU7">
    <property type="interactions" value="14"/>
</dbReference>
<dbReference type="IntAct" id="Q9VCU7">
    <property type="interactions" value="16"/>
</dbReference>
<dbReference type="MINT" id="Q9VCU7"/>
<dbReference type="STRING" id="7227.FBpp0083716"/>
<dbReference type="GlyGen" id="Q9VCU7">
    <property type="glycosylation" value="1 site"/>
</dbReference>
<dbReference type="PaxDb" id="7227-FBpp0083716"/>
<dbReference type="DNASU" id="42695"/>
<dbReference type="EnsemblMetazoa" id="FBtr0084323">
    <property type="protein sequence ID" value="FBpp0083716"/>
    <property type="gene ID" value="FBgn0263143"/>
</dbReference>
<dbReference type="GeneID" id="42695"/>
<dbReference type="KEGG" id="dme:Dmel_CG4771"/>
<dbReference type="UCSC" id="CG4771-RA">
    <property type="organism name" value="d. melanogaster"/>
</dbReference>
<dbReference type="AGR" id="FB:FBgn0263143"/>
<dbReference type="CTD" id="42695"/>
<dbReference type="FlyBase" id="FBgn0263143">
    <property type="gene designation" value="vret"/>
</dbReference>
<dbReference type="VEuPathDB" id="VectorBase:FBgn0263143"/>
<dbReference type="eggNOG" id="KOG2039">
    <property type="taxonomic scope" value="Eukaryota"/>
</dbReference>
<dbReference type="HOGENOM" id="CLU_026119_0_0_1"/>
<dbReference type="InParanoid" id="Q9VCU7"/>
<dbReference type="OMA" id="CIAKYEG"/>
<dbReference type="OrthoDB" id="10023235at2759"/>
<dbReference type="PhylomeDB" id="Q9VCU7"/>
<dbReference type="SignaLink" id="Q9VCU7"/>
<dbReference type="BioGRID-ORCS" id="42695">
    <property type="hits" value="0 hits in 1 CRISPR screen"/>
</dbReference>
<dbReference type="CD-CODE" id="DB0924F8">
    <property type="entry name" value="Yb-body"/>
</dbReference>
<dbReference type="GenomeRNAi" id="42695"/>
<dbReference type="PRO" id="PR:Q9VCU7"/>
<dbReference type="Proteomes" id="UP000000803">
    <property type="component" value="Chromosome 3R"/>
</dbReference>
<dbReference type="Bgee" id="FBgn0263143">
    <property type="expression patterns" value="Expressed in cleaving embryo and 23 other cell types or tissues"/>
</dbReference>
<dbReference type="GO" id="GO:0005737">
    <property type="term" value="C:cytoplasm"/>
    <property type="evidence" value="ECO:0000314"/>
    <property type="project" value="FlyBase"/>
</dbReference>
<dbReference type="GO" id="GO:0005829">
    <property type="term" value="C:cytosol"/>
    <property type="evidence" value="ECO:0000314"/>
    <property type="project" value="FlyBase"/>
</dbReference>
<dbReference type="GO" id="GO:0043186">
    <property type="term" value="C:P granule"/>
    <property type="evidence" value="ECO:0000314"/>
    <property type="project" value="UniProtKB"/>
</dbReference>
<dbReference type="GO" id="GO:0070725">
    <property type="term" value="C:Yb body"/>
    <property type="evidence" value="ECO:0000314"/>
    <property type="project" value="FlyBase"/>
</dbReference>
<dbReference type="GO" id="GO:0051321">
    <property type="term" value="P:meiotic cell cycle"/>
    <property type="evidence" value="ECO:0007669"/>
    <property type="project" value="UniProtKB-KW"/>
</dbReference>
<dbReference type="GO" id="GO:0048477">
    <property type="term" value="P:oogenesis"/>
    <property type="evidence" value="ECO:0000315"/>
    <property type="project" value="FlyBase"/>
</dbReference>
<dbReference type="GO" id="GO:0140990">
    <property type="term" value="P:primary piRNA processing"/>
    <property type="evidence" value="ECO:0000315"/>
    <property type="project" value="FlyBase"/>
</dbReference>
<dbReference type="GO" id="GO:0140965">
    <property type="term" value="P:secondary piRNA processing"/>
    <property type="evidence" value="ECO:0000315"/>
    <property type="project" value="FlyBase"/>
</dbReference>
<dbReference type="CDD" id="cd20444">
    <property type="entry name" value="Tudor_vreteno-like_rpt1"/>
    <property type="match status" value="1"/>
</dbReference>
<dbReference type="CDD" id="cd20445">
    <property type="entry name" value="Tudor_vreteno-like_rpt2"/>
    <property type="match status" value="1"/>
</dbReference>
<dbReference type="Gene3D" id="2.30.30.140">
    <property type="match status" value="2"/>
</dbReference>
<dbReference type="InterPro" id="IPR002999">
    <property type="entry name" value="Tudor"/>
</dbReference>
<dbReference type="InterPro" id="IPR047396">
    <property type="entry name" value="Tudor_vreteno-like_rpt2"/>
</dbReference>
<dbReference type="PANTHER" id="PTHR16442">
    <property type="entry name" value="RING FINGER PROTEIN 17"/>
    <property type="match status" value="1"/>
</dbReference>
<dbReference type="PANTHER" id="PTHR16442:SF1">
    <property type="entry name" value="RING FINGER PROTEIN 17"/>
    <property type="match status" value="1"/>
</dbReference>
<dbReference type="Pfam" id="PF00567">
    <property type="entry name" value="TUDOR"/>
    <property type="match status" value="2"/>
</dbReference>
<dbReference type="SMART" id="SM00333">
    <property type="entry name" value="TUDOR"/>
    <property type="match status" value="2"/>
</dbReference>
<dbReference type="SUPFAM" id="SSF63748">
    <property type="entry name" value="Tudor/PWWP/MBT"/>
    <property type="match status" value="2"/>
</dbReference>
<dbReference type="PROSITE" id="PS50304">
    <property type="entry name" value="TUDOR"/>
    <property type="match status" value="1"/>
</dbReference>
<accession>Q9VCU7</accession>
<name>VRET_DROME</name>
<keyword id="KW-0963">Cytoplasm</keyword>
<keyword id="KW-0469">Meiosis</keyword>
<keyword id="KW-1185">Reference proteome</keyword>
<keyword id="KW-0677">Repeat</keyword>
<feature type="chain" id="PRO_0000425213" description="Protein vreteno">
    <location>
        <begin position="1"/>
        <end position="691"/>
    </location>
</feature>
<feature type="domain" description="Tudor 1" evidence="1">
    <location>
        <begin position="366"/>
        <end position="427"/>
    </location>
</feature>
<feature type="domain" description="Tudor 2" evidence="1">
    <location>
        <begin position="573"/>
        <end position="630"/>
    </location>
</feature>
<feature type="region of interest" description="Disordered" evidence="2">
    <location>
        <begin position="128"/>
        <end position="155"/>
    </location>
</feature>
<feature type="mutagenesis site" description="In vret(46); egg chambers are defective with abnormal nurse cell numbers and improper oocyte positioning. Follicle cells often fail to encapsulate egg chambers, and occasionally form disorganized multicellular layers." evidence="3">
    <original>C</original>
    <variation>Y</variation>
    <location>
        <position position="266"/>
    </location>
</feature>
<feature type="mutagenesis site" description="In vret(39); egg chambers are defective with abnormal nurse cell numbers and improper oocyte positioning. Follicle cells often fail to encapsulate egg chambers, and occasionally form disorganized multicellular layers." evidence="3">
    <original>G</original>
    <variation>E</variation>
    <location>
        <position position="407"/>
    </location>
</feature>
<feature type="mutagenesis site" description="In vret(48-60); the germarium is filled with germ cells that maintain a round spectrosome, suggesting failure of germline stem cells to differentiate." evidence="3">
    <original>IQ</original>
    <variation>LK</variation>
    <location>
        <begin position="536"/>
        <end position="537"/>
    </location>
</feature>
<feature type="mutagenesis site" description="In vret(49); ventralized eggs with no defects in somatic gonadal cell patterning, germ cell differentiation or oocyte specification." evidence="3">
    <original>P</original>
    <variation>L</variation>
    <location>
        <position position="602"/>
    </location>
</feature>
<feature type="mutagenesis site" description="In vret(48-15); ventralized eggs with no defects in somatic gonadal cell patterning, germ cell differentiation or oocyte specification." evidence="3">
    <original>G</original>
    <variation>E</variation>
    <location>
        <position position="610"/>
    </location>
</feature>
<gene>
    <name type="primary">vret</name>
    <name type="ORF">CG4771</name>
</gene>
<protein>
    <recommendedName>
        <fullName>Protein vreteno</fullName>
    </recommendedName>
</protein>
<reference key="1">
    <citation type="journal article" date="2000" name="Science">
        <title>The genome sequence of Drosophila melanogaster.</title>
        <authorList>
            <person name="Adams M.D."/>
            <person name="Celniker S.E."/>
            <person name="Holt R.A."/>
            <person name="Evans C.A."/>
            <person name="Gocayne J.D."/>
            <person name="Amanatides P.G."/>
            <person name="Scherer S.E."/>
            <person name="Li P.W."/>
            <person name="Hoskins R.A."/>
            <person name="Galle R.F."/>
            <person name="George R.A."/>
            <person name="Lewis S.E."/>
            <person name="Richards S."/>
            <person name="Ashburner M."/>
            <person name="Henderson S.N."/>
            <person name="Sutton G.G."/>
            <person name="Wortman J.R."/>
            <person name="Yandell M.D."/>
            <person name="Zhang Q."/>
            <person name="Chen L.X."/>
            <person name="Brandon R.C."/>
            <person name="Rogers Y.-H.C."/>
            <person name="Blazej R.G."/>
            <person name="Champe M."/>
            <person name="Pfeiffer B.D."/>
            <person name="Wan K.H."/>
            <person name="Doyle C."/>
            <person name="Baxter E.G."/>
            <person name="Helt G."/>
            <person name="Nelson C.R."/>
            <person name="Miklos G.L.G."/>
            <person name="Abril J.F."/>
            <person name="Agbayani A."/>
            <person name="An H.-J."/>
            <person name="Andrews-Pfannkoch C."/>
            <person name="Baldwin D."/>
            <person name="Ballew R.M."/>
            <person name="Basu A."/>
            <person name="Baxendale J."/>
            <person name="Bayraktaroglu L."/>
            <person name="Beasley E.M."/>
            <person name="Beeson K.Y."/>
            <person name="Benos P.V."/>
            <person name="Berman B.P."/>
            <person name="Bhandari D."/>
            <person name="Bolshakov S."/>
            <person name="Borkova D."/>
            <person name="Botchan M.R."/>
            <person name="Bouck J."/>
            <person name="Brokstein P."/>
            <person name="Brottier P."/>
            <person name="Burtis K.C."/>
            <person name="Busam D.A."/>
            <person name="Butler H."/>
            <person name="Cadieu E."/>
            <person name="Center A."/>
            <person name="Chandra I."/>
            <person name="Cherry J.M."/>
            <person name="Cawley S."/>
            <person name="Dahlke C."/>
            <person name="Davenport L.B."/>
            <person name="Davies P."/>
            <person name="de Pablos B."/>
            <person name="Delcher A."/>
            <person name="Deng Z."/>
            <person name="Mays A.D."/>
            <person name="Dew I."/>
            <person name="Dietz S.M."/>
            <person name="Dodson K."/>
            <person name="Doup L.E."/>
            <person name="Downes M."/>
            <person name="Dugan-Rocha S."/>
            <person name="Dunkov B.C."/>
            <person name="Dunn P."/>
            <person name="Durbin K.J."/>
            <person name="Evangelista C.C."/>
            <person name="Ferraz C."/>
            <person name="Ferriera S."/>
            <person name="Fleischmann W."/>
            <person name="Fosler C."/>
            <person name="Gabrielian A.E."/>
            <person name="Garg N.S."/>
            <person name="Gelbart W.M."/>
            <person name="Glasser K."/>
            <person name="Glodek A."/>
            <person name="Gong F."/>
            <person name="Gorrell J.H."/>
            <person name="Gu Z."/>
            <person name="Guan P."/>
            <person name="Harris M."/>
            <person name="Harris N.L."/>
            <person name="Harvey D.A."/>
            <person name="Heiman T.J."/>
            <person name="Hernandez J.R."/>
            <person name="Houck J."/>
            <person name="Hostin D."/>
            <person name="Houston K.A."/>
            <person name="Howland T.J."/>
            <person name="Wei M.-H."/>
            <person name="Ibegwam C."/>
            <person name="Jalali M."/>
            <person name="Kalush F."/>
            <person name="Karpen G.H."/>
            <person name="Ke Z."/>
            <person name="Kennison J.A."/>
            <person name="Ketchum K.A."/>
            <person name="Kimmel B.E."/>
            <person name="Kodira C.D."/>
            <person name="Kraft C.L."/>
            <person name="Kravitz S."/>
            <person name="Kulp D."/>
            <person name="Lai Z."/>
            <person name="Lasko P."/>
            <person name="Lei Y."/>
            <person name="Levitsky A.A."/>
            <person name="Li J.H."/>
            <person name="Li Z."/>
            <person name="Liang Y."/>
            <person name="Lin X."/>
            <person name="Liu X."/>
            <person name="Mattei B."/>
            <person name="McIntosh T.C."/>
            <person name="McLeod M.P."/>
            <person name="McPherson D."/>
            <person name="Merkulov G."/>
            <person name="Milshina N.V."/>
            <person name="Mobarry C."/>
            <person name="Morris J."/>
            <person name="Moshrefi A."/>
            <person name="Mount S.M."/>
            <person name="Moy M."/>
            <person name="Murphy B."/>
            <person name="Murphy L."/>
            <person name="Muzny D.M."/>
            <person name="Nelson D.L."/>
            <person name="Nelson D.R."/>
            <person name="Nelson K.A."/>
            <person name="Nixon K."/>
            <person name="Nusskern D.R."/>
            <person name="Pacleb J.M."/>
            <person name="Palazzolo M."/>
            <person name="Pittman G.S."/>
            <person name="Pan S."/>
            <person name="Pollard J."/>
            <person name="Puri V."/>
            <person name="Reese M.G."/>
            <person name="Reinert K."/>
            <person name="Remington K."/>
            <person name="Saunders R.D.C."/>
            <person name="Scheeler F."/>
            <person name="Shen H."/>
            <person name="Shue B.C."/>
            <person name="Siden-Kiamos I."/>
            <person name="Simpson M."/>
            <person name="Skupski M.P."/>
            <person name="Smith T.J."/>
            <person name="Spier E."/>
            <person name="Spradling A.C."/>
            <person name="Stapleton M."/>
            <person name="Strong R."/>
            <person name="Sun E."/>
            <person name="Svirskas R."/>
            <person name="Tector C."/>
            <person name="Turner R."/>
            <person name="Venter E."/>
            <person name="Wang A.H."/>
            <person name="Wang X."/>
            <person name="Wang Z.-Y."/>
            <person name="Wassarman D.A."/>
            <person name="Weinstock G.M."/>
            <person name="Weissenbach J."/>
            <person name="Williams S.M."/>
            <person name="Woodage T."/>
            <person name="Worley K.C."/>
            <person name="Wu D."/>
            <person name="Yang S."/>
            <person name="Yao Q.A."/>
            <person name="Ye J."/>
            <person name="Yeh R.-F."/>
            <person name="Zaveri J.S."/>
            <person name="Zhan M."/>
            <person name="Zhang G."/>
            <person name="Zhao Q."/>
            <person name="Zheng L."/>
            <person name="Zheng X.H."/>
            <person name="Zhong F.N."/>
            <person name="Zhong W."/>
            <person name="Zhou X."/>
            <person name="Zhu S.C."/>
            <person name="Zhu X."/>
            <person name="Smith H.O."/>
            <person name="Gibbs R.A."/>
            <person name="Myers E.W."/>
            <person name="Rubin G.M."/>
            <person name="Venter J.C."/>
        </authorList>
    </citation>
    <scope>NUCLEOTIDE SEQUENCE [LARGE SCALE GENOMIC DNA]</scope>
    <source>
        <strain>Berkeley</strain>
    </source>
</reference>
<reference key="2">
    <citation type="journal article" date="2002" name="Genome Biol.">
        <title>Annotation of the Drosophila melanogaster euchromatic genome: a systematic review.</title>
        <authorList>
            <person name="Misra S."/>
            <person name="Crosby M.A."/>
            <person name="Mungall C.J."/>
            <person name="Matthews B.B."/>
            <person name="Campbell K.S."/>
            <person name="Hradecky P."/>
            <person name="Huang Y."/>
            <person name="Kaminker J.S."/>
            <person name="Millburn G.H."/>
            <person name="Prochnik S.E."/>
            <person name="Smith C.D."/>
            <person name="Tupy J.L."/>
            <person name="Whitfield E.J."/>
            <person name="Bayraktaroglu L."/>
            <person name="Berman B.P."/>
            <person name="Bettencourt B.R."/>
            <person name="Celniker S.E."/>
            <person name="de Grey A.D.N.J."/>
            <person name="Drysdale R.A."/>
            <person name="Harris N.L."/>
            <person name="Richter J."/>
            <person name="Russo S."/>
            <person name="Schroeder A.J."/>
            <person name="Shu S.Q."/>
            <person name="Stapleton M."/>
            <person name="Yamada C."/>
            <person name="Ashburner M."/>
            <person name="Gelbart W.M."/>
            <person name="Rubin G.M."/>
            <person name="Lewis S.E."/>
        </authorList>
    </citation>
    <scope>GENOME REANNOTATION</scope>
    <source>
        <strain>Berkeley</strain>
    </source>
</reference>
<reference key="3">
    <citation type="journal article" date="2002" name="Genome Biol.">
        <title>A Drosophila full-length cDNA resource.</title>
        <authorList>
            <person name="Stapleton M."/>
            <person name="Carlson J.W."/>
            <person name="Brokstein P."/>
            <person name="Yu C."/>
            <person name="Champe M."/>
            <person name="George R.A."/>
            <person name="Guarin H."/>
            <person name="Kronmiller B."/>
            <person name="Pacleb J.M."/>
            <person name="Park S."/>
            <person name="Wan K.H."/>
            <person name="Rubin G.M."/>
            <person name="Celniker S.E."/>
        </authorList>
    </citation>
    <scope>NUCLEOTIDE SEQUENCE [LARGE SCALE MRNA]</scope>
    <source>
        <strain>Berkeley</strain>
        <tissue>Embryo</tissue>
    </source>
</reference>
<reference key="4">
    <citation type="journal article" date="2011" name="Development">
        <title>Vreteno, a gonad-specific protein, is essential for germline development and primary piRNA biogenesis in Drosophila.</title>
        <authorList>
            <person name="Zamparini A.L."/>
            <person name="Davis M.Y."/>
            <person name="Malone C.D."/>
            <person name="Vieira E."/>
            <person name="Zavadil J."/>
            <person name="Sachidanandam R."/>
            <person name="Hannon G.J."/>
            <person name="Lehmann R."/>
        </authorList>
    </citation>
    <scope>FUNCTION</scope>
    <scope>SUBCELLULAR LOCATION</scope>
    <scope>TISSUE SPECIFICITY</scope>
    <scope>DISRUPTION PHENOTYPE</scope>
    <scope>INTERACTION WITH AUB AND PIWI</scope>
    <scope>MUTAGENESIS OF CYS-266; GLY-407; 536-ILE-GLN-537; PRO-602 AND GLY-610</scope>
</reference>
<reference key="5">
    <citation type="journal article" date="2011" name="EMBO J.">
        <title>A systematic analysis of Drosophila TUDOR domain-containing proteins identifies Vreteno and the Tdrd12 family as essential primary piRNA pathway factors.</title>
        <authorList>
            <person name="Handler D."/>
            <person name="Olivieri D."/>
            <person name="Novatchkova M."/>
            <person name="Gruber F.S."/>
            <person name="Meixner K."/>
            <person name="Mechtler K."/>
            <person name="Stark A."/>
            <person name="Sachidanandam R."/>
            <person name="Brennecke J."/>
        </authorList>
    </citation>
    <scope>FUNCTION</scope>
    <scope>SUBCELLULAR LOCATION</scope>
</reference>
<comment type="function">
    <text evidence="3 4">Gonad-specific protein essential for germline development to repress transposable elements and preventing their mobilization, which is essential for the germline integrity. Acts via the piRNA metabolic process in both germline and somatic gonadal tissues by mediating the repression of transposable elements during meiosis. Required for primary piRNA biogenesis in both germline and somatic gonadal tissues.</text>
</comment>
<comment type="subunit">
    <text evidence="3">Interacts with aub and piwi.</text>
</comment>
<comment type="subcellular location">
    <subcellularLocation>
        <location evidence="3 4">Cytoplasm</location>
    </subcellularLocation>
    <subcellularLocation>
        <location evidence="4">Cytoplasm</location>
        <location evidence="4">Cytoplasmic ribonucleoprotein granule</location>
    </subcellularLocation>
    <text evidence="4">Component of the perinuclear meiotic nuage (also known as germline granule or P granule), a germline-specific membraneless ribonucleoprotein biocondensate involved in post-transcriptional regulation of transposons and mRNAs (PubMed:21863019). Localizes to Yb bodies in follicle cells (PubMed:21863019).</text>
</comment>
<comment type="tissue specificity">
    <text evidence="3">Gonad-specific.</text>
</comment>
<comment type="disruption phenotype">
    <text evidence="3">Both female and male vret mutants are sterile.</text>
</comment>
<comment type="miscellaneous">
    <text evidence="5">'Vreteno' means 'woolspinning spindle' in Bulgarian, referring to its eggshell phenotype.</text>
</comment>
<evidence type="ECO:0000255" key="1">
    <source>
        <dbReference type="PROSITE-ProRule" id="PRU00211"/>
    </source>
</evidence>
<evidence type="ECO:0000256" key="2">
    <source>
        <dbReference type="SAM" id="MobiDB-lite"/>
    </source>
</evidence>
<evidence type="ECO:0000269" key="3">
    <source>
    </source>
</evidence>
<evidence type="ECO:0000269" key="4">
    <source>
    </source>
</evidence>
<evidence type="ECO:0000305" key="5">
    <source>
    </source>
</evidence>
<sequence length="691" mass="78964">MESESSQDDWSAFDPMSREYYDQVGNRYTNESGQKLIMEAPLPPKDEKEQRATRQAKYPYLVVPKSSPYVTEKMLINFFGRALIKEMEFRRLSRVYFVYFENIASLETAQQRVQRYPNLIKCITGRPQKEREITSDPVTSTEPMPTPGPAISATERTPVNHNREVPISTGGQNHPEFFRPPLVTKDDYKRGSLLATNDPIQRYLNVKYEFALERHDIYKLKDETRIPQVVLHFRSGRTIPLSTVAVTEEDKTKSLLEDGVSKCVVCQNWTDTFCKLCKMPFCNASCFADVAEQHKQACGKGEILNLDEKVGRKYPKPGLPPSGSKVRITAFEQTNVVYVRSADIQIDIAYYTVLTEVMMLGKDASKLQSTPVCGQIVLYKFEGHMSRAMVLNVDNIKEIYVVFIDFGSVEVTQLERLYECSSYLAGLTCYPVAVKLRGVPRRFVGPNIREVMYELDQSLVFNIKYSSREYDTSKGMQVVVMTEIDINRSLNRLFKTILTPVEPSVSDLGYKEDCLPYIPLHCGKNINVVVMDNTFIQCGFIYCTSIDLAYEVTKMQRDIQEYGEKIAKCATYAPPINELCIAKYEGKWRRGLSVELVGDGYPSILFIDYGNIVPTHVTDIRPYPPQFIFPIMTTQLDLIGVPEKPTDEQIKWLDKNYPIGSVITCSEITFDEETNSYSTRIEKLQEFLSLD</sequence>
<proteinExistence type="evidence at protein level"/>